<reference key="1">
    <citation type="journal article" date="2005" name="Proc. Natl. Acad. Sci. U.S.A.">
        <title>Whole genome sequence of Staphylococcus saprophyticus reveals the pathogenesis of uncomplicated urinary tract infection.</title>
        <authorList>
            <person name="Kuroda M."/>
            <person name="Yamashita A."/>
            <person name="Hirakawa H."/>
            <person name="Kumano M."/>
            <person name="Morikawa K."/>
            <person name="Higashide M."/>
            <person name="Maruyama A."/>
            <person name="Inose Y."/>
            <person name="Matoba K."/>
            <person name="Toh H."/>
            <person name="Kuhara S."/>
            <person name="Hattori M."/>
            <person name="Ohta T."/>
        </authorList>
    </citation>
    <scope>NUCLEOTIDE SEQUENCE [LARGE SCALE GENOMIC DNA]</scope>
    <source>
        <strain>ATCC 15305 / DSM 20229 / NCIMB 8711 / NCTC 7292 / S-41</strain>
    </source>
</reference>
<feature type="chain" id="PRO_0000176844" description="Small ribosomal subunit protein bS6">
    <location>
        <begin position="1"/>
        <end position="101"/>
    </location>
</feature>
<name>RS6_STAS1</name>
<protein>
    <recommendedName>
        <fullName evidence="1">Small ribosomal subunit protein bS6</fullName>
    </recommendedName>
    <alternativeName>
        <fullName evidence="2">30S ribosomal protein S6</fullName>
    </alternativeName>
</protein>
<evidence type="ECO:0000255" key="1">
    <source>
        <dbReference type="HAMAP-Rule" id="MF_00360"/>
    </source>
</evidence>
<evidence type="ECO:0000305" key="2"/>
<gene>
    <name evidence="1" type="primary">rpsF</name>
    <name type="ordered locus">SSP2373</name>
</gene>
<accession>Q49UQ0</accession>
<proteinExistence type="inferred from homology"/>
<organism>
    <name type="scientific">Staphylococcus saprophyticus subsp. saprophyticus (strain ATCC 15305 / DSM 20229 / NCIMB 8711 / NCTC 7292 / S-41)</name>
    <dbReference type="NCBI Taxonomy" id="342451"/>
    <lineage>
        <taxon>Bacteria</taxon>
        <taxon>Bacillati</taxon>
        <taxon>Bacillota</taxon>
        <taxon>Bacilli</taxon>
        <taxon>Bacillales</taxon>
        <taxon>Staphylococcaceae</taxon>
        <taxon>Staphylococcus</taxon>
    </lineage>
</organism>
<comment type="function">
    <text evidence="1">Binds together with bS18 to 16S ribosomal RNA.</text>
</comment>
<comment type="similarity">
    <text evidence="1">Belongs to the bacterial ribosomal protein bS6 family.</text>
</comment>
<keyword id="KW-1185">Reference proteome</keyword>
<keyword id="KW-0687">Ribonucleoprotein</keyword>
<keyword id="KW-0689">Ribosomal protein</keyword>
<keyword id="KW-0694">RNA-binding</keyword>
<keyword id="KW-0699">rRNA-binding</keyword>
<dbReference type="EMBL" id="AP008934">
    <property type="protein sequence ID" value="BAE19518.1"/>
    <property type="molecule type" value="Genomic_DNA"/>
</dbReference>
<dbReference type="RefSeq" id="WP_011303966.1">
    <property type="nucleotide sequence ID" value="NZ_MTGA01000035.1"/>
</dbReference>
<dbReference type="SMR" id="Q49UQ0"/>
<dbReference type="GeneID" id="3616619"/>
<dbReference type="KEGG" id="ssp:SSP2373"/>
<dbReference type="PATRIC" id="fig|342451.11.peg.2361"/>
<dbReference type="eggNOG" id="COG0360">
    <property type="taxonomic scope" value="Bacteria"/>
</dbReference>
<dbReference type="HOGENOM" id="CLU_113441_5_3_9"/>
<dbReference type="OrthoDB" id="9812702at2"/>
<dbReference type="Proteomes" id="UP000006371">
    <property type="component" value="Chromosome"/>
</dbReference>
<dbReference type="GO" id="GO:0005737">
    <property type="term" value="C:cytoplasm"/>
    <property type="evidence" value="ECO:0007669"/>
    <property type="project" value="UniProtKB-ARBA"/>
</dbReference>
<dbReference type="GO" id="GO:1990904">
    <property type="term" value="C:ribonucleoprotein complex"/>
    <property type="evidence" value="ECO:0007669"/>
    <property type="project" value="UniProtKB-KW"/>
</dbReference>
<dbReference type="GO" id="GO:0005840">
    <property type="term" value="C:ribosome"/>
    <property type="evidence" value="ECO:0007669"/>
    <property type="project" value="UniProtKB-KW"/>
</dbReference>
<dbReference type="GO" id="GO:0070181">
    <property type="term" value="F:small ribosomal subunit rRNA binding"/>
    <property type="evidence" value="ECO:0007669"/>
    <property type="project" value="TreeGrafter"/>
</dbReference>
<dbReference type="GO" id="GO:0003735">
    <property type="term" value="F:structural constituent of ribosome"/>
    <property type="evidence" value="ECO:0007669"/>
    <property type="project" value="InterPro"/>
</dbReference>
<dbReference type="GO" id="GO:0006412">
    <property type="term" value="P:translation"/>
    <property type="evidence" value="ECO:0007669"/>
    <property type="project" value="UniProtKB-UniRule"/>
</dbReference>
<dbReference type="CDD" id="cd00473">
    <property type="entry name" value="bS6"/>
    <property type="match status" value="1"/>
</dbReference>
<dbReference type="FunFam" id="3.30.70.60:FF:000002">
    <property type="entry name" value="30S ribosomal protein S6"/>
    <property type="match status" value="1"/>
</dbReference>
<dbReference type="Gene3D" id="3.30.70.60">
    <property type="match status" value="1"/>
</dbReference>
<dbReference type="HAMAP" id="MF_00360">
    <property type="entry name" value="Ribosomal_bS6"/>
    <property type="match status" value="1"/>
</dbReference>
<dbReference type="InterPro" id="IPR000529">
    <property type="entry name" value="Ribosomal_bS6"/>
</dbReference>
<dbReference type="InterPro" id="IPR020815">
    <property type="entry name" value="Ribosomal_bS6_CS"/>
</dbReference>
<dbReference type="InterPro" id="IPR035980">
    <property type="entry name" value="Ribosomal_bS6_sf"/>
</dbReference>
<dbReference type="InterPro" id="IPR020814">
    <property type="entry name" value="Ribosomal_S6_plastid/chlpt"/>
</dbReference>
<dbReference type="InterPro" id="IPR014717">
    <property type="entry name" value="Transl_elong_EF1B/ribsomal_bS6"/>
</dbReference>
<dbReference type="NCBIfam" id="TIGR00166">
    <property type="entry name" value="S6"/>
    <property type="match status" value="1"/>
</dbReference>
<dbReference type="PANTHER" id="PTHR21011">
    <property type="entry name" value="MITOCHONDRIAL 28S RIBOSOMAL PROTEIN S6"/>
    <property type="match status" value="1"/>
</dbReference>
<dbReference type="PANTHER" id="PTHR21011:SF1">
    <property type="entry name" value="SMALL RIBOSOMAL SUBUNIT PROTEIN BS6M"/>
    <property type="match status" value="1"/>
</dbReference>
<dbReference type="Pfam" id="PF01250">
    <property type="entry name" value="Ribosomal_S6"/>
    <property type="match status" value="1"/>
</dbReference>
<dbReference type="SUPFAM" id="SSF54995">
    <property type="entry name" value="Ribosomal protein S6"/>
    <property type="match status" value="1"/>
</dbReference>
<dbReference type="PROSITE" id="PS01048">
    <property type="entry name" value="RIBOSOMAL_S6"/>
    <property type="match status" value="1"/>
</dbReference>
<sequence>MRTYEVMYIIRPNIEEDAKKAVVERFNGILASHGSEVLEAKDWGKRRLAYEINDFSEGYYNIVRIQTADNEATDEFQRLAKISDDVIRYIVIREDEDKTRK</sequence>